<name>UP355_STAAC</name>
<organism>
    <name type="scientific">Staphylococcus aureus (strain COL)</name>
    <dbReference type="NCBI Taxonomy" id="93062"/>
    <lineage>
        <taxon>Bacteria</taxon>
        <taxon>Bacillati</taxon>
        <taxon>Bacillota</taxon>
        <taxon>Bacilli</taxon>
        <taxon>Bacillales</taxon>
        <taxon>Staphylococcaceae</taxon>
        <taxon>Staphylococcus</taxon>
    </lineage>
</organism>
<proteinExistence type="inferred from homology"/>
<dbReference type="EMBL" id="CP000046">
    <property type="protein sequence ID" value="AAW38924.1"/>
    <property type="molecule type" value="Genomic_DNA"/>
</dbReference>
<dbReference type="RefSeq" id="WP_000763768.1">
    <property type="nucleotide sequence ID" value="NZ_JBGOFO010000001.1"/>
</dbReference>
<dbReference type="KEGG" id="sac:SACOL0457"/>
<dbReference type="HOGENOM" id="CLU_152601_0_0_9"/>
<dbReference type="Proteomes" id="UP000000530">
    <property type="component" value="Chromosome"/>
</dbReference>
<dbReference type="InterPro" id="IPR025889">
    <property type="entry name" value="GSP17M-like_dom"/>
</dbReference>
<dbReference type="Pfam" id="PF11181">
    <property type="entry name" value="YflT"/>
    <property type="match status" value="1"/>
</dbReference>
<sequence length="135" mass="15122">MADITVVNDTGELYNVINQKKSEGYLESELTIISKSKLHLNDLHDSEISLISTSGTFSDRMTKLLTGEDGEHAVLSRYNLAPDELEKYKQLILDDKMLVVAVRDKSSHQEVHENNSAYEEIDITHFAEASKGPKA</sequence>
<evidence type="ECO:0000305" key="1"/>
<comment type="similarity">
    <text evidence="1">Belongs to the UPF0355 family.</text>
</comment>
<gene>
    <name type="ordered locus">SACOL0457</name>
</gene>
<reference key="1">
    <citation type="journal article" date="2005" name="J. Bacteriol.">
        <title>Insights on evolution of virulence and resistance from the complete genome analysis of an early methicillin-resistant Staphylococcus aureus strain and a biofilm-producing methicillin-resistant Staphylococcus epidermidis strain.</title>
        <authorList>
            <person name="Gill S.R."/>
            <person name="Fouts D.E."/>
            <person name="Archer G.L."/>
            <person name="Mongodin E.F."/>
            <person name="DeBoy R.T."/>
            <person name="Ravel J."/>
            <person name="Paulsen I.T."/>
            <person name="Kolonay J.F."/>
            <person name="Brinkac L.M."/>
            <person name="Beanan M.J."/>
            <person name="Dodson R.J."/>
            <person name="Daugherty S.C."/>
            <person name="Madupu R."/>
            <person name="Angiuoli S.V."/>
            <person name="Durkin A.S."/>
            <person name="Haft D.H."/>
            <person name="Vamathevan J.J."/>
            <person name="Khouri H."/>
            <person name="Utterback T.R."/>
            <person name="Lee C."/>
            <person name="Dimitrov G."/>
            <person name="Jiang L."/>
            <person name="Qin H."/>
            <person name="Weidman J."/>
            <person name="Tran K."/>
            <person name="Kang K.H."/>
            <person name="Hance I.R."/>
            <person name="Nelson K.E."/>
            <person name="Fraser C.M."/>
        </authorList>
    </citation>
    <scope>NUCLEOTIDE SEQUENCE [LARGE SCALE GENOMIC DNA]</scope>
    <source>
        <strain>COL</strain>
    </source>
</reference>
<accession>Q5HIR0</accession>
<feature type="chain" id="PRO_0000220344" description="UPF0355 protein SACOL0457">
    <location>
        <begin position="1"/>
        <end position="135"/>
    </location>
</feature>
<protein>
    <recommendedName>
        <fullName>UPF0355 protein SACOL0457</fullName>
    </recommendedName>
</protein>